<gene>
    <name type="primary">fmp52</name>
    <name type="ORF">AFUA_6G08930</name>
</gene>
<keyword id="KW-0472">Membrane</keyword>
<keyword id="KW-0496">Mitochondrion</keyword>
<keyword id="KW-1000">Mitochondrion outer membrane</keyword>
<keyword id="KW-1185">Reference proteome</keyword>
<keyword id="KW-0809">Transit peptide</keyword>
<protein>
    <recommendedName>
        <fullName>Protein fmp52, mitochondrial</fullName>
    </recommendedName>
</protein>
<accession>Q4WMS0</accession>
<evidence type="ECO:0000250" key="1"/>
<evidence type="ECO:0000305" key="2"/>
<comment type="subcellular location">
    <subcellularLocation>
        <location evidence="1">Mitochondrion outer membrane</location>
        <topology evidence="1">Peripheral membrane protein</topology>
    </subcellularLocation>
</comment>
<comment type="similarity">
    <text evidence="2">Belongs to the FMP52 family.</text>
</comment>
<comment type="sequence caution" evidence="2">
    <conflict type="erroneous gene model prediction">
        <sequence resource="EMBL-CDS" id="EAL88744"/>
    </conflict>
</comment>
<proteinExistence type="inferred from homology"/>
<feature type="transit peptide" description="Mitochondrion">
    <location>
        <begin position="1"/>
        <end status="unknown"/>
    </location>
</feature>
<feature type="chain" id="PRO_0000301812" description="Protein fmp52, mitochondrial">
    <location>
        <begin status="unknown"/>
        <end position="234"/>
    </location>
</feature>
<reference key="1">
    <citation type="journal article" date="2005" name="Nature">
        <title>Genomic sequence of the pathogenic and allergenic filamentous fungus Aspergillus fumigatus.</title>
        <authorList>
            <person name="Nierman W.C."/>
            <person name="Pain A."/>
            <person name="Anderson M.J."/>
            <person name="Wortman J.R."/>
            <person name="Kim H.S."/>
            <person name="Arroyo J."/>
            <person name="Berriman M."/>
            <person name="Abe K."/>
            <person name="Archer D.B."/>
            <person name="Bermejo C."/>
            <person name="Bennett J.W."/>
            <person name="Bowyer P."/>
            <person name="Chen D."/>
            <person name="Collins M."/>
            <person name="Coulsen R."/>
            <person name="Davies R."/>
            <person name="Dyer P.S."/>
            <person name="Farman M.L."/>
            <person name="Fedorova N."/>
            <person name="Fedorova N.D."/>
            <person name="Feldblyum T.V."/>
            <person name="Fischer R."/>
            <person name="Fosker N."/>
            <person name="Fraser A."/>
            <person name="Garcia J.L."/>
            <person name="Garcia M.J."/>
            <person name="Goble A."/>
            <person name="Goldman G.H."/>
            <person name="Gomi K."/>
            <person name="Griffith-Jones S."/>
            <person name="Gwilliam R."/>
            <person name="Haas B.J."/>
            <person name="Haas H."/>
            <person name="Harris D.E."/>
            <person name="Horiuchi H."/>
            <person name="Huang J."/>
            <person name="Humphray S."/>
            <person name="Jimenez J."/>
            <person name="Keller N."/>
            <person name="Khouri H."/>
            <person name="Kitamoto K."/>
            <person name="Kobayashi T."/>
            <person name="Konzack S."/>
            <person name="Kulkarni R."/>
            <person name="Kumagai T."/>
            <person name="Lafton A."/>
            <person name="Latge J.-P."/>
            <person name="Li W."/>
            <person name="Lord A."/>
            <person name="Lu C."/>
            <person name="Majoros W.H."/>
            <person name="May G.S."/>
            <person name="Miller B.L."/>
            <person name="Mohamoud Y."/>
            <person name="Molina M."/>
            <person name="Monod M."/>
            <person name="Mouyna I."/>
            <person name="Mulligan S."/>
            <person name="Murphy L.D."/>
            <person name="O'Neil S."/>
            <person name="Paulsen I."/>
            <person name="Penalva M.A."/>
            <person name="Pertea M."/>
            <person name="Price C."/>
            <person name="Pritchard B.L."/>
            <person name="Quail M.A."/>
            <person name="Rabbinowitsch E."/>
            <person name="Rawlins N."/>
            <person name="Rajandream M.A."/>
            <person name="Reichard U."/>
            <person name="Renauld H."/>
            <person name="Robson G.D."/>
            <person name="Rodriguez de Cordoba S."/>
            <person name="Rodriguez-Pena J.M."/>
            <person name="Ronning C.M."/>
            <person name="Rutter S."/>
            <person name="Salzberg S.L."/>
            <person name="Sanchez M."/>
            <person name="Sanchez-Ferrero J.C."/>
            <person name="Saunders D."/>
            <person name="Seeger K."/>
            <person name="Squares R."/>
            <person name="Squares S."/>
            <person name="Takeuchi M."/>
            <person name="Tekaia F."/>
            <person name="Turner G."/>
            <person name="Vazquez de Aldana C.R."/>
            <person name="Weidman J."/>
            <person name="White O."/>
            <person name="Woodward J.R."/>
            <person name="Yu J.-H."/>
            <person name="Fraser C.M."/>
            <person name="Galagan J.E."/>
            <person name="Asai K."/>
            <person name="Machida M."/>
            <person name="Hall N."/>
            <person name="Barrell B.G."/>
            <person name="Denning D.W."/>
        </authorList>
    </citation>
    <scope>NUCLEOTIDE SEQUENCE [LARGE SCALE GENOMIC DNA]</scope>
    <source>
        <strain>ATCC MYA-4609 / CBS 101355 / FGSC A1100 / Af293</strain>
    </source>
</reference>
<name>FMP52_ASPFU</name>
<sequence>MANVALIGATGMVGSHILTSLLENPAIARVDTISRRTPSAAAAAPQTKLTTFVSDDTSRWAAQLSSLTPTPSIFISAFGTTRAAAGGFENQYKVEHGLNVEMARAARDAGTKVYVLISSGGANKASSFAYPRMKGEIEEDVKALGFERTVILRPGLISGQRQESRPAEAALRFIAGIAGKVHSGLKDGWAQDADVIARAAVNAGLKALDGDVPPGSEKLWILGGSDIIKYGGKK</sequence>
<dbReference type="EMBL" id="AAHF01000006">
    <property type="protein sequence ID" value="EAL88744.1"/>
    <property type="status" value="ALT_SEQ"/>
    <property type="molecule type" value="Genomic_DNA"/>
</dbReference>
<dbReference type="RefSeq" id="XP_750782.1">
    <property type="nucleotide sequence ID" value="XM_745689.1"/>
</dbReference>
<dbReference type="SMR" id="Q4WMS0"/>
<dbReference type="FunCoup" id="Q4WMS0">
    <property type="interactions" value="88"/>
</dbReference>
<dbReference type="STRING" id="330879.Q4WMS0"/>
<dbReference type="GeneID" id="3508069"/>
<dbReference type="KEGG" id="afm:AFUA_6G08930"/>
<dbReference type="eggNOG" id="KOG4039">
    <property type="taxonomic scope" value="Eukaryota"/>
</dbReference>
<dbReference type="HOGENOM" id="CLU_071330_3_0_1"/>
<dbReference type="InParanoid" id="Q4WMS0"/>
<dbReference type="OrthoDB" id="430436at2759"/>
<dbReference type="Proteomes" id="UP000002530">
    <property type="component" value="Chromosome 6"/>
</dbReference>
<dbReference type="GO" id="GO:0005737">
    <property type="term" value="C:cytoplasm"/>
    <property type="evidence" value="ECO:0000318"/>
    <property type="project" value="GO_Central"/>
</dbReference>
<dbReference type="GO" id="GO:0005741">
    <property type="term" value="C:mitochondrial outer membrane"/>
    <property type="evidence" value="ECO:0007669"/>
    <property type="project" value="UniProtKB-SubCell"/>
</dbReference>
<dbReference type="GO" id="GO:0051170">
    <property type="term" value="P:import into nucleus"/>
    <property type="evidence" value="ECO:0000318"/>
    <property type="project" value="GO_Central"/>
</dbReference>
<dbReference type="FunFam" id="3.40.50.720:FF:000366">
    <property type="entry name" value="Protein FMP52, mitochondrial"/>
    <property type="match status" value="1"/>
</dbReference>
<dbReference type="Gene3D" id="3.40.50.720">
    <property type="entry name" value="NAD(P)-binding Rossmann-like Domain"/>
    <property type="match status" value="1"/>
</dbReference>
<dbReference type="InterPro" id="IPR001509">
    <property type="entry name" value="Epimerase_deHydtase"/>
</dbReference>
<dbReference type="InterPro" id="IPR036291">
    <property type="entry name" value="NAD(P)-bd_dom_sf"/>
</dbReference>
<dbReference type="PANTHER" id="PTHR14097">
    <property type="entry name" value="OXIDOREDUCTASE HTATIP2"/>
    <property type="match status" value="1"/>
</dbReference>
<dbReference type="PANTHER" id="PTHR14097:SF7">
    <property type="entry name" value="OXIDOREDUCTASE HTATIP2"/>
    <property type="match status" value="1"/>
</dbReference>
<dbReference type="Pfam" id="PF01370">
    <property type="entry name" value="Epimerase"/>
    <property type="match status" value="1"/>
</dbReference>
<dbReference type="SUPFAM" id="SSF51735">
    <property type="entry name" value="NAD(P)-binding Rossmann-fold domains"/>
    <property type="match status" value="1"/>
</dbReference>
<organism>
    <name type="scientific">Aspergillus fumigatus (strain ATCC MYA-4609 / CBS 101355 / FGSC A1100 / Af293)</name>
    <name type="common">Neosartorya fumigata</name>
    <dbReference type="NCBI Taxonomy" id="330879"/>
    <lineage>
        <taxon>Eukaryota</taxon>
        <taxon>Fungi</taxon>
        <taxon>Dikarya</taxon>
        <taxon>Ascomycota</taxon>
        <taxon>Pezizomycotina</taxon>
        <taxon>Eurotiomycetes</taxon>
        <taxon>Eurotiomycetidae</taxon>
        <taxon>Eurotiales</taxon>
        <taxon>Aspergillaceae</taxon>
        <taxon>Aspergillus</taxon>
        <taxon>Aspergillus subgen. Fumigati</taxon>
    </lineage>
</organism>